<accession>Q84KK6</accession>
<feature type="chain" id="PRO_0000411975" description="Isoflavone 4'-O-methyltransferase">
    <location>
        <begin position="1"/>
        <end position="367"/>
    </location>
</feature>
<feature type="active site" description="Proton acceptor" evidence="1">
    <location>
        <position position="271"/>
    </location>
</feature>
<feature type="binding site" evidence="1">
    <location>
        <begin position="209"/>
        <end position="212"/>
    </location>
    <ligand>
        <name>S-adenosyl-L-methionine</name>
        <dbReference type="ChEBI" id="CHEBI:59789"/>
    </ligand>
</feature>
<feature type="binding site" evidence="1">
    <location>
        <begin position="233"/>
        <end position="234"/>
    </location>
    <ligand>
        <name>S-adenosyl-L-methionine</name>
        <dbReference type="ChEBI" id="CHEBI:59789"/>
    </ligand>
</feature>
<feature type="binding site" evidence="1">
    <location>
        <position position="233"/>
    </location>
    <ligand>
        <name>S-adenosyl-L-methionine</name>
        <dbReference type="ChEBI" id="CHEBI:59789"/>
    </ligand>
</feature>
<feature type="binding site" evidence="1">
    <location>
        <begin position="253"/>
        <end position="254"/>
    </location>
    <ligand>
        <name>S-adenosyl-L-methionine</name>
        <dbReference type="ChEBI" id="CHEBI:59789"/>
    </ligand>
</feature>
<feature type="binding site" evidence="1">
    <location>
        <position position="267"/>
    </location>
    <ligand>
        <name>S-adenosyl-L-methionine</name>
        <dbReference type="ChEBI" id="CHEBI:59789"/>
    </ligand>
</feature>
<reference key="1">
    <citation type="journal article" date="2003" name="Plant Cell Physiol.">
        <title>cDNA cloning and biochemical characterization of S-adenosyl-L-methionine: 2,7,4'-trihydroxyisoflavanone 4'-O-methyltransferase, a critical enzyme of the legume isoflavonoid phytoalexin pathway.</title>
        <authorList>
            <person name="Akashi T."/>
            <person name="Sawada Y."/>
            <person name="Shimada N."/>
            <person name="Sakurai N."/>
            <person name="Aoki T."/>
            <person name="Ayabe S."/>
        </authorList>
    </citation>
    <scope>NUCLEOTIDE SEQUENCE [MRNA]</scope>
    <scope>FUNCTION</scope>
    <scope>CATALYTIC ACTIVITY</scope>
    <scope>INDUCTION BY ELICITOR</scope>
</reference>
<reference key="2">
    <citation type="journal article" date="2006" name="Phytochemistry">
        <title>Catalytic specificity of pea O-methyltransferases suggests gene duplication for (+)-pisatin biosynthesis.</title>
        <authorList>
            <person name="Akashi T."/>
            <person name="VanEtten H.D."/>
            <person name="Sawada Y."/>
            <person name="Wasmann C.C."/>
            <person name="Uchiyama H."/>
            <person name="Ayabe S."/>
        </authorList>
    </citation>
    <scope>FUNCTION</scope>
    <scope>CATALYTIC ACTIVITY</scope>
    <scope>BIOPHYSICOCHEMICAL PROPERTIES</scope>
</reference>
<comment type="function">
    <text evidence="2 3">2-hydroxyisoflavanone 4'-O-methyltransferase involved in the biosynthesis of formononetin. Can use 2,7,4'-trihydroxyisoflavanone, (+)-6a-hydroxymaackiain or medicarpin as substrate, but not daidzein or (-)-6a-hydroxymaackiain.</text>
</comment>
<comment type="catalytic activity">
    <reaction evidence="2 3">
        <text>a 4'-hydroxyisoflavone + S-adenosyl-L-methionine = a 4'-methoxyisoflavone + S-adenosyl-L-homocysteine + H(+)</text>
        <dbReference type="Rhea" id="RHEA:31739"/>
        <dbReference type="ChEBI" id="CHEBI:15378"/>
        <dbReference type="ChEBI" id="CHEBI:57856"/>
        <dbReference type="ChEBI" id="CHEBI:59789"/>
        <dbReference type="ChEBI" id="CHEBI:63328"/>
        <dbReference type="ChEBI" id="CHEBI:133959"/>
        <dbReference type="EC" id="2.1.1.46"/>
    </reaction>
</comment>
<comment type="catalytic activity">
    <reaction evidence="2 3">
        <text>(2R,3S)-2,4',7-trihydroxyisoflavanone + S-adenosyl-L-methionine = (2R,3S)-2,7-dihydroxy-4'-methoxyisoflavanone + S-adenosyl-L-homocysteine + H(+)</text>
        <dbReference type="Rhea" id="RHEA:31371"/>
        <dbReference type="ChEBI" id="CHEBI:15378"/>
        <dbReference type="ChEBI" id="CHEBI:57856"/>
        <dbReference type="ChEBI" id="CHEBI:59789"/>
        <dbReference type="ChEBI" id="CHEBI:63325"/>
        <dbReference type="ChEBI" id="CHEBI:85906"/>
        <dbReference type="EC" id="2.1.1.212"/>
    </reaction>
</comment>
<comment type="biophysicochemical properties">
    <kinetics>
        <KM evidence="3">3 uM for 2,7,4'-trihydroxyisoflavanone</KM>
        <KM evidence="3">8 uM for (+)-6a-hydroxymaackiain</KM>
        <Vmax evidence="3">20000.0 pmol/sec/mg enzyme with 2,7,4'-trihydroxyisoflavanone as substrate</Vmax>
        <Vmax evidence="3">2700.0 pmol/sec/mg enzyme with (+)-6a-hydroxymaackiain as substrate</Vmax>
    </kinetics>
</comment>
<comment type="induction">
    <text evidence="2">Up-regulated by elicitor.</text>
</comment>
<comment type="similarity">
    <text evidence="1">Belongs to the class I-like SAM-binding methyltransferase superfamily. Cation-independent O-methyltransferase family. COMT subfamily.</text>
</comment>
<protein>
    <recommendedName>
        <fullName>Isoflavone 4'-O-methyltransferase</fullName>
        <shortName>GeHI4'OMT</shortName>
        <ecNumber evidence="2 3">2.1.1.46</ecNumber>
    </recommendedName>
    <alternativeName>
        <fullName>2,7,4'-trihydroxyisoflavanone 4'-O-methyltransferase</fullName>
        <ecNumber evidence="2 3">2.1.1.212</ecNumber>
    </alternativeName>
    <alternativeName>
        <fullName>S-adenosyl-L-methionine:2,7,4'-trihydroxyisoflavanone 4'-O-methyltransferase</fullName>
    </alternativeName>
</protein>
<organism>
    <name type="scientific">Glycyrrhiza echinata</name>
    <name type="common">Licorice</name>
    <dbReference type="NCBI Taxonomy" id="46348"/>
    <lineage>
        <taxon>Eukaryota</taxon>
        <taxon>Viridiplantae</taxon>
        <taxon>Streptophyta</taxon>
        <taxon>Embryophyta</taxon>
        <taxon>Tracheophyta</taxon>
        <taxon>Spermatophyta</taxon>
        <taxon>Magnoliopsida</taxon>
        <taxon>eudicotyledons</taxon>
        <taxon>Gunneridae</taxon>
        <taxon>Pentapetalae</taxon>
        <taxon>rosids</taxon>
        <taxon>fabids</taxon>
        <taxon>Fabales</taxon>
        <taxon>Fabaceae</taxon>
        <taxon>Papilionoideae</taxon>
        <taxon>50 kb inversion clade</taxon>
        <taxon>NPAAA clade</taxon>
        <taxon>Hologalegina</taxon>
        <taxon>IRL clade</taxon>
        <taxon>Galegeae</taxon>
        <taxon>Glycyrrhiza</taxon>
    </lineage>
</organism>
<name>I4OMT_GLYEC</name>
<evidence type="ECO:0000255" key="1">
    <source>
        <dbReference type="PROSITE-ProRule" id="PRU01020"/>
    </source>
</evidence>
<evidence type="ECO:0000269" key="2">
    <source>
    </source>
</evidence>
<evidence type="ECO:0000269" key="3">
    <source>
    </source>
</evidence>
<proteinExistence type="evidence at protein level"/>
<keyword id="KW-0489">Methyltransferase</keyword>
<keyword id="KW-0949">S-adenosyl-L-methionine</keyword>
<keyword id="KW-0808">Transferase</keyword>
<dbReference type="EC" id="2.1.1.46" evidence="2 3"/>
<dbReference type="EC" id="2.1.1.212" evidence="2 3"/>
<dbReference type="EMBL" id="AB091684">
    <property type="protein sequence ID" value="BAC58011.1"/>
    <property type="molecule type" value="mRNA"/>
</dbReference>
<dbReference type="SMR" id="Q84KK6"/>
<dbReference type="KEGG" id="ag:BAC58011"/>
<dbReference type="BRENDA" id="2.1.1.212">
    <property type="organism ID" value="2486"/>
</dbReference>
<dbReference type="SABIO-RK" id="Q84KK6"/>
<dbReference type="GO" id="GO:0102670">
    <property type="term" value="F:2,7,4'-trihydroxyisoflavanone-4'-O-methyltransferase activity"/>
    <property type="evidence" value="ECO:0007669"/>
    <property type="project" value="UniProtKB-EC"/>
</dbReference>
<dbReference type="GO" id="GO:0030746">
    <property type="term" value="F:isoflavone 4'-O-methyltransferase activity"/>
    <property type="evidence" value="ECO:0000314"/>
    <property type="project" value="UniProtKB"/>
</dbReference>
<dbReference type="GO" id="GO:0008171">
    <property type="term" value="F:O-methyltransferase activity"/>
    <property type="evidence" value="ECO:0007669"/>
    <property type="project" value="InterPro"/>
</dbReference>
<dbReference type="GO" id="GO:0046983">
    <property type="term" value="F:protein dimerization activity"/>
    <property type="evidence" value="ECO:0007669"/>
    <property type="project" value="InterPro"/>
</dbReference>
<dbReference type="GO" id="GO:0009701">
    <property type="term" value="P:isoflavonoid phytoalexin biosynthetic process"/>
    <property type="evidence" value="ECO:0000314"/>
    <property type="project" value="UniProtKB"/>
</dbReference>
<dbReference type="GO" id="GO:0032259">
    <property type="term" value="P:methylation"/>
    <property type="evidence" value="ECO:0007669"/>
    <property type="project" value="UniProtKB-KW"/>
</dbReference>
<dbReference type="FunFam" id="1.10.10.10:FF:000213">
    <property type="entry name" value="Coniferyl alcohol 9-O-methyltransferase"/>
    <property type="match status" value="1"/>
</dbReference>
<dbReference type="FunFam" id="3.40.50.150:FF:000206">
    <property type="entry name" value="O-methyltransferase ZRP4"/>
    <property type="match status" value="1"/>
</dbReference>
<dbReference type="Gene3D" id="3.40.50.150">
    <property type="entry name" value="Vaccinia Virus protein VP39"/>
    <property type="match status" value="1"/>
</dbReference>
<dbReference type="Gene3D" id="1.10.10.10">
    <property type="entry name" value="Winged helix-like DNA-binding domain superfamily/Winged helix DNA-binding domain"/>
    <property type="match status" value="1"/>
</dbReference>
<dbReference type="InterPro" id="IPR016461">
    <property type="entry name" value="COMT-like"/>
</dbReference>
<dbReference type="InterPro" id="IPR001077">
    <property type="entry name" value="O_MeTrfase_dom"/>
</dbReference>
<dbReference type="InterPro" id="IPR012967">
    <property type="entry name" value="Plant_O-MeTrfase_dimerisation"/>
</dbReference>
<dbReference type="InterPro" id="IPR029063">
    <property type="entry name" value="SAM-dependent_MTases_sf"/>
</dbReference>
<dbReference type="InterPro" id="IPR036388">
    <property type="entry name" value="WH-like_DNA-bd_sf"/>
</dbReference>
<dbReference type="InterPro" id="IPR036390">
    <property type="entry name" value="WH_DNA-bd_sf"/>
</dbReference>
<dbReference type="PANTHER" id="PTHR11746">
    <property type="entry name" value="O-METHYLTRANSFERASE"/>
    <property type="match status" value="1"/>
</dbReference>
<dbReference type="Pfam" id="PF08100">
    <property type="entry name" value="Dimerisation"/>
    <property type="match status" value="1"/>
</dbReference>
<dbReference type="Pfam" id="PF00891">
    <property type="entry name" value="Methyltransf_2"/>
    <property type="match status" value="1"/>
</dbReference>
<dbReference type="PIRSF" id="PIRSF005739">
    <property type="entry name" value="O-mtase"/>
    <property type="match status" value="1"/>
</dbReference>
<dbReference type="SUPFAM" id="SSF53335">
    <property type="entry name" value="S-adenosyl-L-methionine-dependent methyltransferases"/>
    <property type="match status" value="1"/>
</dbReference>
<dbReference type="SUPFAM" id="SSF46785">
    <property type="entry name" value="Winged helix' DNA-binding domain"/>
    <property type="match status" value="1"/>
</dbReference>
<dbReference type="PROSITE" id="PS51683">
    <property type="entry name" value="SAM_OMT_II"/>
    <property type="match status" value="1"/>
</dbReference>
<gene>
    <name type="primary">HI4'OMT</name>
</gene>
<sequence>MAFSTNGSEEIELYHAQIHLYKHVYNFVSSMALKSAMELGIADVIHNHGKPITLPELASALKLHPSKVGILYRFLRLLTHNGFFAKTTVPSQNGKDGEEEEETAYALTPPSKLLVKGKPTCLASIVRGALHPSSLDMWRSSEKWFKEDKELTLFESATGESFWDFLNKDSESGTLSMFQEAMAADSQMFKLALKECRHVFEGLESLVDVGGGTGGVTKLIHEEFPHLKCTVFDQPQVVGNLSGNENLKFVGGDMFKSIPPADAVLLKWVLHDWNDELSLKILKNSKEAISGKGKEGKVIIIDISIDEASGDRELTELQLDYDLVMLTMFNGKEREKKEWEKLISDAGFSSYKITPICGFKSLIEVFP</sequence>